<dbReference type="EC" id="2.8.1.8" evidence="1"/>
<dbReference type="EMBL" id="CH954178">
    <property type="protein sequence ID" value="EDV52515.1"/>
    <property type="molecule type" value="Genomic_DNA"/>
</dbReference>
<dbReference type="SMR" id="B3NIL9"/>
<dbReference type="EnsemblMetazoa" id="FBtr0133365">
    <property type="protein sequence ID" value="FBpp0131857"/>
    <property type="gene ID" value="FBgn0105583"/>
</dbReference>
<dbReference type="EnsemblMetazoa" id="XM_001973453.3">
    <property type="protein sequence ID" value="XP_001973489.1"/>
    <property type="gene ID" value="LOC6545884"/>
</dbReference>
<dbReference type="GeneID" id="6545884"/>
<dbReference type="KEGG" id="der:6545884"/>
<dbReference type="CTD" id="40259"/>
<dbReference type="eggNOG" id="KOG2672">
    <property type="taxonomic scope" value="Eukaryota"/>
</dbReference>
<dbReference type="HOGENOM" id="CLU_033144_1_2_1"/>
<dbReference type="OMA" id="PYCDIDF"/>
<dbReference type="OrthoDB" id="3231at2759"/>
<dbReference type="PhylomeDB" id="B3NIL9"/>
<dbReference type="UniPathway" id="UPA00538">
    <property type="reaction ID" value="UER00593"/>
</dbReference>
<dbReference type="ChiTaRS" id="Las">
    <property type="organism name" value="fly"/>
</dbReference>
<dbReference type="Proteomes" id="UP000008711">
    <property type="component" value="Unassembled WGS sequence"/>
</dbReference>
<dbReference type="GO" id="GO:0005739">
    <property type="term" value="C:mitochondrion"/>
    <property type="evidence" value="ECO:0007669"/>
    <property type="project" value="UniProtKB-SubCell"/>
</dbReference>
<dbReference type="GO" id="GO:0051539">
    <property type="term" value="F:4 iron, 4 sulfur cluster binding"/>
    <property type="evidence" value="ECO:0007669"/>
    <property type="project" value="UniProtKB-UniRule"/>
</dbReference>
<dbReference type="GO" id="GO:0016992">
    <property type="term" value="F:lipoate synthase activity"/>
    <property type="evidence" value="ECO:0007669"/>
    <property type="project" value="UniProtKB-UniRule"/>
</dbReference>
<dbReference type="GO" id="GO:0046872">
    <property type="term" value="F:metal ion binding"/>
    <property type="evidence" value="ECO:0007669"/>
    <property type="project" value="UniProtKB-KW"/>
</dbReference>
<dbReference type="CDD" id="cd01335">
    <property type="entry name" value="Radical_SAM"/>
    <property type="match status" value="1"/>
</dbReference>
<dbReference type="FunFam" id="3.20.20.70:FF:000036">
    <property type="entry name" value="Lipoyl synthase, mitochondrial"/>
    <property type="match status" value="1"/>
</dbReference>
<dbReference type="Gene3D" id="3.20.20.70">
    <property type="entry name" value="Aldolase class I"/>
    <property type="match status" value="1"/>
</dbReference>
<dbReference type="HAMAP" id="MF_00206">
    <property type="entry name" value="Lipoyl_synth"/>
    <property type="match status" value="1"/>
</dbReference>
<dbReference type="InterPro" id="IPR013785">
    <property type="entry name" value="Aldolase_TIM"/>
</dbReference>
<dbReference type="InterPro" id="IPR006638">
    <property type="entry name" value="Elp3/MiaA/NifB-like_rSAM"/>
</dbReference>
<dbReference type="InterPro" id="IPR031691">
    <property type="entry name" value="LIAS_N"/>
</dbReference>
<dbReference type="InterPro" id="IPR003698">
    <property type="entry name" value="Lipoyl_synth"/>
</dbReference>
<dbReference type="InterPro" id="IPR007197">
    <property type="entry name" value="rSAM"/>
</dbReference>
<dbReference type="NCBIfam" id="TIGR00510">
    <property type="entry name" value="lipA"/>
    <property type="match status" value="1"/>
</dbReference>
<dbReference type="NCBIfam" id="NF004019">
    <property type="entry name" value="PRK05481.1"/>
    <property type="match status" value="1"/>
</dbReference>
<dbReference type="NCBIfam" id="NF009544">
    <property type="entry name" value="PRK12928.1"/>
    <property type="match status" value="1"/>
</dbReference>
<dbReference type="PANTHER" id="PTHR10949">
    <property type="entry name" value="LIPOYL SYNTHASE"/>
    <property type="match status" value="1"/>
</dbReference>
<dbReference type="PANTHER" id="PTHR10949:SF0">
    <property type="entry name" value="LIPOYL SYNTHASE, MITOCHONDRIAL"/>
    <property type="match status" value="1"/>
</dbReference>
<dbReference type="Pfam" id="PF16881">
    <property type="entry name" value="LIAS_N"/>
    <property type="match status" value="1"/>
</dbReference>
<dbReference type="Pfam" id="PF04055">
    <property type="entry name" value="Radical_SAM"/>
    <property type="match status" value="1"/>
</dbReference>
<dbReference type="PIRSF" id="PIRSF005963">
    <property type="entry name" value="Lipoyl_synth"/>
    <property type="match status" value="1"/>
</dbReference>
<dbReference type="SFLD" id="SFLDF00271">
    <property type="entry name" value="lipoyl_synthase"/>
    <property type="match status" value="1"/>
</dbReference>
<dbReference type="SFLD" id="SFLDS00029">
    <property type="entry name" value="Radical_SAM"/>
    <property type="match status" value="1"/>
</dbReference>
<dbReference type="SMART" id="SM00729">
    <property type="entry name" value="Elp3"/>
    <property type="match status" value="1"/>
</dbReference>
<dbReference type="SUPFAM" id="SSF102114">
    <property type="entry name" value="Radical SAM enzymes"/>
    <property type="match status" value="1"/>
</dbReference>
<dbReference type="PROSITE" id="PS51918">
    <property type="entry name" value="RADICAL_SAM"/>
    <property type="match status" value="1"/>
</dbReference>
<proteinExistence type="inferred from homology"/>
<evidence type="ECO:0000255" key="1">
    <source>
        <dbReference type="HAMAP-Rule" id="MF_03123"/>
    </source>
</evidence>
<evidence type="ECO:0000255" key="2">
    <source>
        <dbReference type="PROSITE-ProRule" id="PRU01266"/>
    </source>
</evidence>
<keyword id="KW-0004">4Fe-4S</keyword>
<keyword id="KW-0408">Iron</keyword>
<keyword id="KW-0411">Iron-sulfur</keyword>
<keyword id="KW-0479">Metal-binding</keyword>
<keyword id="KW-0496">Mitochondrion</keyword>
<keyword id="KW-0949">S-adenosyl-L-methionine</keyword>
<keyword id="KW-0808">Transferase</keyword>
<accession>B3NIL9</accession>
<organism>
    <name type="scientific">Drosophila erecta</name>
    <name type="common">Fruit fly</name>
    <dbReference type="NCBI Taxonomy" id="7220"/>
    <lineage>
        <taxon>Eukaryota</taxon>
        <taxon>Metazoa</taxon>
        <taxon>Ecdysozoa</taxon>
        <taxon>Arthropoda</taxon>
        <taxon>Hexapoda</taxon>
        <taxon>Insecta</taxon>
        <taxon>Pterygota</taxon>
        <taxon>Neoptera</taxon>
        <taxon>Endopterygota</taxon>
        <taxon>Diptera</taxon>
        <taxon>Brachycera</taxon>
        <taxon>Muscomorpha</taxon>
        <taxon>Ephydroidea</taxon>
        <taxon>Drosophilidae</taxon>
        <taxon>Drosophila</taxon>
        <taxon>Sophophora</taxon>
    </lineage>
</organism>
<reference key="1">
    <citation type="journal article" date="2007" name="Nature">
        <title>Evolution of genes and genomes on the Drosophila phylogeny.</title>
        <authorList>
            <consortium name="Drosophila 12 genomes consortium"/>
        </authorList>
    </citation>
    <scope>NUCLEOTIDE SEQUENCE [LARGE SCALE GENOMIC DNA]</scope>
    <source>
        <strain>Tucson 14021-0224.01</strain>
    </source>
</reference>
<gene>
    <name evidence="1" type="primary">Las</name>
    <name type="ORF">GG13311</name>
</gene>
<protein>
    <recommendedName>
        <fullName evidence="1">Lipoyl synthase, mitochondrial</fullName>
        <ecNumber evidence="1">2.8.1.8</ecNumber>
    </recommendedName>
    <alternativeName>
        <fullName evidence="1">Lipoate synthase</fullName>
        <shortName evidence="1">LS</shortName>
        <shortName evidence="1">Lip-syn</shortName>
    </alternativeName>
    <alternativeName>
        <fullName evidence="1">Lipoic acid synthase</fullName>
    </alternativeName>
</protein>
<sequence length="379" mass="42807">MFGMLRALKTHVEAPIVVATRAVSTNAEKLEEIRERLAKGPNFQDFVQNPENSRSEWEKYEGKLRREKGEEQRLRLPPWLKTTIPVGKNYAKIKAQMRELKLSTVCEEARCPNIGECWGGGEHGTQTATIMLMGDTCTRGCRFCSVKTARRPPPLDVNEPVNTATAIASWGLDYIVLTSVDRDDLPDGGSKHIAETVREIKARNSNIFVECLVPDFRGNLECVETIANSGLDVYAHNIETVEKLTPYVRDRRAHYRQTLQVLTEAKRFNPNLITKSSIMLGLGETDGEIECTLKDLREAGVDCVTLGQYMQPTNKHLKVIEYVTPEKFKHWEERGNALGFLYTASGPLVRSSYKAGEFFITSILENRKKRQNATEIAKE</sequence>
<comment type="function">
    <text evidence="1">Catalyzes the radical-mediated insertion of two sulfur atoms into the C-6 and C-8 positions of the octanoyl moiety bound to the lipoyl domains of lipoate-dependent enzymes, thereby converting the octanoylated domains into lipoylated derivatives.</text>
</comment>
<comment type="catalytic activity">
    <reaction evidence="1">
        <text>[[Fe-S] cluster scaffold protein carrying a second [4Fe-4S](2+) cluster] + N(6)-octanoyl-L-lysyl-[protein] + 2 oxidized [2Fe-2S]-[ferredoxin] + 2 S-adenosyl-L-methionine + 4 H(+) = [[Fe-S] cluster scaffold protein] + N(6)-[(R)-dihydrolipoyl]-L-lysyl-[protein] + 4 Fe(3+) + 2 hydrogen sulfide + 2 5'-deoxyadenosine + 2 L-methionine + 2 reduced [2Fe-2S]-[ferredoxin]</text>
        <dbReference type="Rhea" id="RHEA:16585"/>
        <dbReference type="Rhea" id="RHEA-COMP:9928"/>
        <dbReference type="Rhea" id="RHEA-COMP:10000"/>
        <dbReference type="Rhea" id="RHEA-COMP:10001"/>
        <dbReference type="Rhea" id="RHEA-COMP:10475"/>
        <dbReference type="Rhea" id="RHEA-COMP:14568"/>
        <dbReference type="Rhea" id="RHEA-COMP:14569"/>
        <dbReference type="ChEBI" id="CHEBI:15378"/>
        <dbReference type="ChEBI" id="CHEBI:17319"/>
        <dbReference type="ChEBI" id="CHEBI:29034"/>
        <dbReference type="ChEBI" id="CHEBI:29919"/>
        <dbReference type="ChEBI" id="CHEBI:33722"/>
        <dbReference type="ChEBI" id="CHEBI:33737"/>
        <dbReference type="ChEBI" id="CHEBI:33738"/>
        <dbReference type="ChEBI" id="CHEBI:57844"/>
        <dbReference type="ChEBI" id="CHEBI:59789"/>
        <dbReference type="ChEBI" id="CHEBI:78809"/>
        <dbReference type="ChEBI" id="CHEBI:83100"/>
        <dbReference type="EC" id="2.8.1.8"/>
    </reaction>
</comment>
<comment type="cofactor">
    <cofactor evidence="1">
        <name>[4Fe-4S] cluster</name>
        <dbReference type="ChEBI" id="CHEBI:49883"/>
    </cofactor>
    <text evidence="1">Binds 2 [4Fe-4S] clusters per subunit. One cluster is coordinated with 3 cysteines and an exchangeable S-adenosyl-L-methionine.</text>
</comment>
<comment type="pathway">
    <text evidence="1">Protein modification; protein lipoylation via endogenous pathway; protein N(6)-(lipoyl)lysine from octanoyl-[acyl-carrier-protein]: step 2/2.</text>
</comment>
<comment type="subcellular location">
    <subcellularLocation>
        <location evidence="1">Mitochondrion</location>
    </subcellularLocation>
</comment>
<comment type="miscellaneous">
    <text evidence="1">This protein may be expected to contain an N-terminal transit peptide but none has been predicted.</text>
</comment>
<comment type="similarity">
    <text evidence="1">Belongs to the radical SAM superfamily. Lipoyl synthase family.</text>
</comment>
<name>LIAS_DROER</name>
<feature type="chain" id="PRO_0000398217" description="Lipoyl synthase, mitochondrial">
    <location>
        <begin position="1"/>
        <end position="379"/>
    </location>
</feature>
<feature type="domain" description="Radical SAM core" evidence="2">
    <location>
        <begin position="122"/>
        <end position="341"/>
    </location>
</feature>
<feature type="binding site" evidence="1">
    <location>
        <position position="106"/>
    </location>
    <ligand>
        <name>[4Fe-4S] cluster</name>
        <dbReference type="ChEBI" id="CHEBI:49883"/>
        <label>1</label>
    </ligand>
</feature>
<feature type="binding site" evidence="1">
    <location>
        <position position="111"/>
    </location>
    <ligand>
        <name>[4Fe-4S] cluster</name>
        <dbReference type="ChEBI" id="CHEBI:49883"/>
        <label>1</label>
    </ligand>
</feature>
<feature type="binding site" evidence="1">
    <location>
        <position position="117"/>
    </location>
    <ligand>
        <name>[4Fe-4S] cluster</name>
        <dbReference type="ChEBI" id="CHEBI:49883"/>
        <label>1</label>
    </ligand>
</feature>
<feature type="binding site" evidence="1">
    <location>
        <position position="137"/>
    </location>
    <ligand>
        <name>[4Fe-4S] cluster</name>
        <dbReference type="ChEBI" id="CHEBI:49883"/>
        <label>2</label>
        <note>4Fe-4S-S-AdoMet</note>
    </ligand>
</feature>
<feature type="binding site" evidence="1">
    <location>
        <position position="141"/>
    </location>
    <ligand>
        <name>[4Fe-4S] cluster</name>
        <dbReference type="ChEBI" id="CHEBI:49883"/>
        <label>2</label>
        <note>4Fe-4S-S-AdoMet</note>
    </ligand>
</feature>
<feature type="binding site" evidence="1">
    <location>
        <position position="144"/>
    </location>
    <ligand>
        <name>[4Fe-4S] cluster</name>
        <dbReference type="ChEBI" id="CHEBI:49883"/>
        <label>2</label>
        <note>4Fe-4S-S-AdoMet</note>
    </ligand>
</feature>
<feature type="binding site" evidence="1">
    <location>
        <position position="352"/>
    </location>
    <ligand>
        <name>[4Fe-4S] cluster</name>
        <dbReference type="ChEBI" id="CHEBI:49883"/>
        <label>1</label>
    </ligand>
</feature>